<accession>Q7Z4L5</accession>
<accession>A8MUZ3</accession>
<accession>Q3LIE4</accession>
<accession>Q53T84</accession>
<accession>Q6P4A1</accession>
<accession>Q6PIF5</accession>
<accession>Q8NCN3</accession>
<accession>Q96MA4</accession>
<accession>Q9HAK8</accession>
<proteinExistence type="evidence at protein level"/>
<reference key="1">
    <citation type="journal article" date="2003" name="Cancer Lett.">
        <title>Neuroblastoma oligo-capping cDNA project: toward the understanding of the genesis and biology of neuroblastoma.</title>
        <authorList>
            <person name="Ohira M."/>
            <person name="Morohashi A."/>
            <person name="Nakamura Y."/>
            <person name="Isogai E."/>
            <person name="Furuya K."/>
            <person name="Hamano S."/>
            <person name="Machida T."/>
            <person name="Aoyama M."/>
            <person name="Fukumura M."/>
            <person name="Miyazaki K."/>
            <person name="Suzuki Y."/>
            <person name="Sugano S."/>
            <person name="Hirato J."/>
            <person name="Nakagawara A."/>
        </authorList>
    </citation>
    <scope>NUCLEOTIDE SEQUENCE [LARGE SCALE MRNA] (ISOFORM 2)</scope>
    <scope>VARIANTS MET-201 AND ALA-276</scope>
    <source>
        <tissue>Neuroblastoma</tissue>
    </source>
</reference>
<reference key="2">
    <citation type="journal article" date="2005" name="Nature">
        <title>Generation and annotation of the DNA sequences of human chromosomes 2 and 4.</title>
        <authorList>
            <person name="Hillier L.W."/>
            <person name="Graves T.A."/>
            <person name="Fulton R.S."/>
            <person name="Fulton L.A."/>
            <person name="Pepin K.H."/>
            <person name="Minx P."/>
            <person name="Wagner-McPherson C."/>
            <person name="Layman D."/>
            <person name="Wylie K."/>
            <person name="Sekhon M."/>
            <person name="Becker M.C."/>
            <person name="Fewell G.A."/>
            <person name="Delehaunty K.D."/>
            <person name="Miner T.L."/>
            <person name="Nash W.E."/>
            <person name="Kremitzki C."/>
            <person name="Oddy L."/>
            <person name="Du H."/>
            <person name="Sun H."/>
            <person name="Bradshaw-Cordum H."/>
            <person name="Ali J."/>
            <person name="Carter J."/>
            <person name="Cordes M."/>
            <person name="Harris A."/>
            <person name="Isak A."/>
            <person name="van Brunt A."/>
            <person name="Nguyen C."/>
            <person name="Du F."/>
            <person name="Courtney L."/>
            <person name="Kalicki J."/>
            <person name="Ozersky P."/>
            <person name="Abbott S."/>
            <person name="Armstrong J."/>
            <person name="Belter E.A."/>
            <person name="Caruso L."/>
            <person name="Cedroni M."/>
            <person name="Cotton M."/>
            <person name="Davidson T."/>
            <person name="Desai A."/>
            <person name="Elliott G."/>
            <person name="Erb T."/>
            <person name="Fronick C."/>
            <person name="Gaige T."/>
            <person name="Haakenson W."/>
            <person name="Haglund K."/>
            <person name="Holmes A."/>
            <person name="Harkins R."/>
            <person name="Kim K."/>
            <person name="Kruchowski S.S."/>
            <person name="Strong C.M."/>
            <person name="Grewal N."/>
            <person name="Goyea E."/>
            <person name="Hou S."/>
            <person name="Levy A."/>
            <person name="Martinka S."/>
            <person name="Mead K."/>
            <person name="McLellan M.D."/>
            <person name="Meyer R."/>
            <person name="Randall-Maher J."/>
            <person name="Tomlinson C."/>
            <person name="Dauphin-Kohlberg S."/>
            <person name="Kozlowicz-Reilly A."/>
            <person name="Shah N."/>
            <person name="Swearengen-Shahid S."/>
            <person name="Snider J."/>
            <person name="Strong J.T."/>
            <person name="Thompson J."/>
            <person name="Yoakum M."/>
            <person name="Leonard S."/>
            <person name="Pearman C."/>
            <person name="Trani L."/>
            <person name="Radionenko M."/>
            <person name="Waligorski J.E."/>
            <person name="Wang C."/>
            <person name="Rock S.M."/>
            <person name="Tin-Wollam A.-M."/>
            <person name="Maupin R."/>
            <person name="Latreille P."/>
            <person name="Wendl M.C."/>
            <person name="Yang S.-P."/>
            <person name="Pohl C."/>
            <person name="Wallis J.W."/>
            <person name="Spieth J."/>
            <person name="Bieri T.A."/>
            <person name="Berkowicz N."/>
            <person name="Nelson J.O."/>
            <person name="Osborne J."/>
            <person name="Ding L."/>
            <person name="Meyer R."/>
            <person name="Sabo A."/>
            <person name="Shotland Y."/>
            <person name="Sinha P."/>
            <person name="Wohldmann P.E."/>
            <person name="Cook L.L."/>
            <person name="Hickenbotham M.T."/>
            <person name="Eldred J."/>
            <person name="Williams D."/>
            <person name="Jones T.A."/>
            <person name="She X."/>
            <person name="Ciccarelli F.D."/>
            <person name="Izaurralde E."/>
            <person name="Taylor J."/>
            <person name="Schmutz J."/>
            <person name="Myers R.M."/>
            <person name="Cox D.R."/>
            <person name="Huang X."/>
            <person name="McPherson J.D."/>
            <person name="Mardis E.R."/>
            <person name="Clifton S.W."/>
            <person name="Warren W.C."/>
            <person name="Chinwalla A.T."/>
            <person name="Eddy S.R."/>
            <person name="Marra M.A."/>
            <person name="Ovcharenko I."/>
            <person name="Furey T.S."/>
            <person name="Miller W."/>
            <person name="Eichler E.E."/>
            <person name="Bork P."/>
            <person name="Suyama M."/>
            <person name="Torrents D."/>
            <person name="Waterston R.H."/>
            <person name="Wilson R.K."/>
        </authorList>
    </citation>
    <scope>NUCLEOTIDE SEQUENCE [LARGE SCALE GENOMIC DNA]</scope>
</reference>
<reference key="3">
    <citation type="journal article" date="2004" name="Genome Res.">
        <title>The status, quality, and expansion of the NIH full-length cDNA project: the Mammalian Gene Collection (MGC).</title>
        <authorList>
            <consortium name="The MGC Project Team"/>
        </authorList>
    </citation>
    <scope>NUCLEOTIDE SEQUENCE [LARGE SCALE MRNA] (ISOFORM 1)</scope>
    <scope>VARIANTS MET-201 AND ALA-276</scope>
    <source>
        <tissue>Adrenal cortex</tissue>
        <tissue>Testis</tissue>
    </source>
</reference>
<reference key="4">
    <citation type="journal article" date="2004" name="Nat. Genet.">
        <title>Complete sequencing and characterization of 21,243 full-length human cDNAs.</title>
        <authorList>
            <person name="Ota T."/>
            <person name="Suzuki Y."/>
            <person name="Nishikawa T."/>
            <person name="Otsuki T."/>
            <person name="Sugiyama T."/>
            <person name="Irie R."/>
            <person name="Wakamatsu A."/>
            <person name="Hayashi K."/>
            <person name="Sato H."/>
            <person name="Nagai K."/>
            <person name="Kimura K."/>
            <person name="Makita H."/>
            <person name="Sekine M."/>
            <person name="Obayashi M."/>
            <person name="Nishi T."/>
            <person name="Shibahara T."/>
            <person name="Tanaka T."/>
            <person name="Ishii S."/>
            <person name="Yamamoto J."/>
            <person name="Saito K."/>
            <person name="Kawai Y."/>
            <person name="Isono Y."/>
            <person name="Nakamura Y."/>
            <person name="Nagahari K."/>
            <person name="Murakami K."/>
            <person name="Yasuda T."/>
            <person name="Iwayanagi T."/>
            <person name="Wagatsuma M."/>
            <person name="Shiratori A."/>
            <person name="Sudo H."/>
            <person name="Hosoiri T."/>
            <person name="Kaku Y."/>
            <person name="Kodaira H."/>
            <person name="Kondo H."/>
            <person name="Sugawara M."/>
            <person name="Takahashi M."/>
            <person name="Kanda K."/>
            <person name="Yokoi T."/>
            <person name="Furuya T."/>
            <person name="Kikkawa E."/>
            <person name="Omura Y."/>
            <person name="Abe K."/>
            <person name="Kamihara K."/>
            <person name="Katsuta N."/>
            <person name="Sato K."/>
            <person name="Tanikawa M."/>
            <person name="Yamazaki M."/>
            <person name="Ninomiya K."/>
            <person name="Ishibashi T."/>
            <person name="Yamashita H."/>
            <person name="Murakawa K."/>
            <person name="Fujimori K."/>
            <person name="Tanai H."/>
            <person name="Kimata M."/>
            <person name="Watanabe M."/>
            <person name="Hiraoka S."/>
            <person name="Chiba Y."/>
            <person name="Ishida S."/>
            <person name="Ono Y."/>
            <person name="Takiguchi S."/>
            <person name="Watanabe S."/>
            <person name="Yosida M."/>
            <person name="Hotuta T."/>
            <person name="Kusano J."/>
            <person name="Kanehori K."/>
            <person name="Takahashi-Fujii A."/>
            <person name="Hara H."/>
            <person name="Tanase T.-O."/>
            <person name="Nomura Y."/>
            <person name="Togiya S."/>
            <person name="Komai F."/>
            <person name="Hara R."/>
            <person name="Takeuchi K."/>
            <person name="Arita M."/>
            <person name="Imose N."/>
            <person name="Musashino K."/>
            <person name="Yuuki H."/>
            <person name="Oshima A."/>
            <person name="Sasaki N."/>
            <person name="Aotsuka S."/>
            <person name="Yoshikawa Y."/>
            <person name="Matsunawa H."/>
            <person name="Ichihara T."/>
            <person name="Shiohata N."/>
            <person name="Sano S."/>
            <person name="Moriya S."/>
            <person name="Momiyama H."/>
            <person name="Satoh N."/>
            <person name="Takami S."/>
            <person name="Terashima Y."/>
            <person name="Suzuki O."/>
            <person name="Nakagawa S."/>
            <person name="Senoh A."/>
            <person name="Mizoguchi H."/>
            <person name="Goto Y."/>
            <person name="Shimizu F."/>
            <person name="Wakebe H."/>
            <person name="Hishigaki H."/>
            <person name="Watanabe T."/>
            <person name="Sugiyama A."/>
            <person name="Takemoto M."/>
            <person name="Kawakami B."/>
            <person name="Yamazaki M."/>
            <person name="Watanabe K."/>
            <person name="Kumagai A."/>
            <person name="Itakura S."/>
            <person name="Fukuzumi Y."/>
            <person name="Fujimori Y."/>
            <person name="Komiyama M."/>
            <person name="Tashiro H."/>
            <person name="Tanigami A."/>
            <person name="Fujiwara T."/>
            <person name="Ono T."/>
            <person name="Yamada K."/>
            <person name="Fujii Y."/>
            <person name="Ozaki K."/>
            <person name="Hirao M."/>
            <person name="Ohmori Y."/>
            <person name="Kawabata A."/>
            <person name="Hikiji T."/>
            <person name="Kobatake N."/>
            <person name="Inagaki H."/>
            <person name="Ikema Y."/>
            <person name="Okamoto S."/>
            <person name="Okitani R."/>
            <person name="Kawakami T."/>
            <person name="Noguchi S."/>
            <person name="Itoh T."/>
            <person name="Shigeta K."/>
            <person name="Senba T."/>
            <person name="Matsumura K."/>
            <person name="Nakajima Y."/>
            <person name="Mizuno T."/>
            <person name="Morinaga M."/>
            <person name="Sasaki M."/>
            <person name="Togashi T."/>
            <person name="Oyama M."/>
            <person name="Hata H."/>
            <person name="Watanabe M."/>
            <person name="Komatsu T."/>
            <person name="Mizushima-Sugano J."/>
            <person name="Satoh T."/>
            <person name="Shirai Y."/>
            <person name="Takahashi Y."/>
            <person name="Nakagawa K."/>
            <person name="Okumura K."/>
            <person name="Nagase T."/>
            <person name="Nomura N."/>
            <person name="Kikuchi H."/>
            <person name="Masuho Y."/>
            <person name="Yamashita R."/>
            <person name="Nakai K."/>
            <person name="Yada T."/>
            <person name="Nakamura Y."/>
            <person name="Ohara O."/>
            <person name="Isogai T."/>
            <person name="Sugano S."/>
        </authorList>
    </citation>
    <scope>NUCLEOTIDE SEQUENCE [LARGE SCALE MRNA] OF 1-701 AND 1029-1316 (ISOFORM 1)</scope>
    <scope>VARIANTS MET-201 AND ALA-276</scope>
    <source>
        <tissue>Embryo</tissue>
        <tissue>Testis</tissue>
    </source>
</reference>
<reference key="5">
    <citation type="journal article" date="2002" name="DNA Res.">
        <title>Characterization of size-fractionated cDNA libraries generated by the in vitro recombination-assisted method.</title>
        <authorList>
            <person name="Ohara O."/>
            <person name="Nagase T."/>
            <person name="Mitsui G."/>
            <person name="Kohga H."/>
            <person name="Kikuno R."/>
            <person name="Hiraoka S."/>
            <person name="Takahashi Y."/>
            <person name="Kitajima S."/>
            <person name="Saga Y."/>
            <person name="Koseki H."/>
        </authorList>
    </citation>
    <scope>NUCLEOTIDE SEQUENCE [LARGE SCALE MRNA] OF 464-1316 (ISOFORM 1)</scope>
    <source>
        <tissue>Brain</tissue>
    </source>
</reference>
<reference key="6">
    <citation type="journal article" date="2010" name="Genes Dev.">
        <title>TULP3 bridges the IFT-A complex and membrane phosphoinositides to promote trafficking of G protein-coupled receptors into primary cilia.</title>
        <authorList>
            <person name="Mukhopadhyay S."/>
            <person name="Wen X."/>
            <person name="Chih B."/>
            <person name="Nelson C.D."/>
            <person name="Lane W.S."/>
            <person name="Scales S.J."/>
            <person name="Jackson P.K."/>
        </authorList>
    </citation>
    <scope>IDENTIFICATION IN THE IFT-A COMPLEX</scope>
</reference>
<reference key="7">
    <citation type="journal article" date="2011" name="Nat. Genet.">
        <title>TTC21B contributes both causal and modifying alleles across the ciliopathy spectrum.</title>
        <authorList>
            <person name="Davis E.E."/>
            <person name="Zhang Q."/>
            <person name="Liu Q."/>
            <person name="Diplas B.H."/>
            <person name="Davey L.M."/>
            <person name="Hartley J."/>
            <person name="Stoetzel C."/>
            <person name="Szymanska K."/>
            <person name="Ramaswami G."/>
            <person name="Logan C.V."/>
            <person name="Muzny D.M."/>
            <person name="Young A.C."/>
            <person name="Wheeler D.A."/>
            <person name="Cruz P."/>
            <person name="Morgan M."/>
            <person name="Lewis L.R."/>
            <person name="Cherukuri P."/>
            <person name="Maskeri B."/>
            <person name="Hansen N.F."/>
            <person name="Mullikin J.C."/>
            <person name="Blakesley R.W."/>
            <person name="Bouffard G.G."/>
            <person name="Gyapay G."/>
            <person name="Rieger S."/>
            <person name="Tonshoff B."/>
            <person name="Kern I."/>
            <person name="Soliman N.A."/>
            <person name="Neuhaus T.J."/>
            <person name="Swoboda K.J."/>
            <person name="Kayserili H."/>
            <person name="Gallagher T.E."/>
            <person name="Lewis R.A."/>
            <person name="Bergmann C."/>
            <person name="Otto E.A."/>
            <person name="Saunier S."/>
            <person name="Scambler P.J."/>
            <person name="Beales P.L."/>
            <person name="Gleeson J.G."/>
            <person name="Maher E.R."/>
            <person name="Attie-Bitach T."/>
            <person name="Dollfus H."/>
            <person name="Johnson C.A."/>
            <person name="Green E.D."/>
            <person name="Gibbs R.A."/>
            <person name="Hildebrandt F."/>
            <person name="Pierce E.A."/>
            <person name="Katsanis N."/>
        </authorList>
    </citation>
    <scope>INVOLVEMENT IN CILIOPATHIES</scope>
    <scope>VARIANTS NPHP12 ARG-150; LEU-209; SER-231; ARG-566 AND CYS-1167</scope>
    <scope>VARIANTS SRTD4 SER-231; TYR-755 AND PRO-795</scope>
    <scope>VARIANTS JBTS11 ASN-591; CYS-867 AND VAL-1186</scope>
    <scope>VARIANTS TYR-60; ARG-66; GLU-157; LEU-222; SER-231; ASN-242; CYS-255; VAL-280; SER-327; CYS-347; GLY-411; ARG-412; GLU-424; CYS-616; VAL-624; ARG-645; THR-724; LEU-753; VAL-844; HIS-867; ARG-869; GLN-939; TRP-939; VAL-1002; VAL-1011; CYS-1035; ASN-1041; ARG-1103; SER-1208; HIS-1284 AND GLY-1311</scope>
    <scope>CHARACTERIZATION OF VARIANTS NPHP12 ARG-150; LEU-209; SER-231; ARG-566 AND CYS-1167</scope>
    <scope>CHARACTERIZATION OF VARIANTS SRTD4 SER-231; TYR-755 AND PRO-795</scope>
    <scope>CHARACTERIZATION OF VARIANTS JBTS11 ASN-591; CYS-867 AND VAL-1186</scope>
    <scope>CHARACTERIZATION OF VARIANTS TYR-60; GLU-157; LEU-222; SER-231; CYS-255; VAL-280; SER-327; CYS-347; GLY-411; LEU-753; VAL-844; HIS-867; ARG-869; GLN-939; TRP-939; VAL-1002; ARG-1103; ASN-1041 AND SER-1208</scope>
</reference>
<reference key="8">
    <citation type="journal article" date="2015" name="PLoS ONE">
        <title>Characterization of tetratricopeptide repeat-containing proteins critical for cilia formation and function.</title>
        <authorList>
            <person name="Xu Y."/>
            <person name="Cao J."/>
            <person name="Huang S."/>
            <person name="Feng D."/>
            <person name="Zhang W."/>
            <person name="Zhu X."/>
            <person name="Yan X."/>
        </authorList>
    </citation>
    <scope>INTERACTION WITH TTC25</scope>
</reference>
<reference key="9">
    <citation type="journal article" date="2017" name="Mol. Biol. Cell">
        <title>Intraflagellar transport-A complex mediates ciliary entry and retrograde trafficking of ciliary G protein-coupled receptors.</title>
        <authorList>
            <person name="Hirano T."/>
            <person name="Katoh Y."/>
            <person name="Nakayama K."/>
        </authorList>
    </citation>
    <scope>IDENTIFICATION IN THE IFT-A COMPLEX</scope>
    <scope>FUNCTION</scope>
</reference>
<reference key="10">
    <citation type="journal article" date="2012" name="Am. J. Hum. Genet.">
        <title>Mutations in C5ORF42 cause Joubert syndrome in the French Canadian population.</title>
        <authorList>
            <person name="Srour M."/>
            <person name="Schwartzentruber J."/>
            <person name="Hamdan F.F."/>
            <person name="Ospina L.H."/>
            <person name="Patry L."/>
            <person name="Labuda D."/>
            <person name="Massicotte C."/>
            <person name="Dobrzeniecka S."/>
            <person name="Capo-Chichi J.M."/>
            <person name="Papillon-Cavanagh S."/>
            <person name="Samuels M.E."/>
            <person name="Boycott K.M."/>
            <person name="Shevell M.I."/>
            <person name="Laframboise R."/>
            <person name="Desilets V."/>
            <person name="Maranda B."/>
            <person name="Rouleau G.A."/>
            <person name="Majewski J."/>
            <person name="Michaud J.L."/>
        </authorList>
    </citation>
    <scope>VARIANT JBTS11 THR-1011</scope>
</reference>
<reference key="11">
    <citation type="journal article" date="2016" name="Sci. Rep.">
        <title>Destabilization of the IFT-B cilia core complex due to mutations in IFT81 causes a spectrum of short-rib polydactyly syndrome.</title>
        <authorList>
            <person name="Duran I."/>
            <person name="Taylor S.P."/>
            <person name="Zhang W."/>
            <person name="Martin J."/>
            <person name="Forlenza K.N."/>
            <person name="Spiro R.P."/>
            <person name="Nickerson D.A."/>
            <person name="Bamshad M."/>
            <person name="Cohn D.H."/>
            <person name="Krakow D."/>
        </authorList>
    </citation>
    <scope>VARIANT HIS-867</scope>
</reference>
<feature type="chain" id="PRO_0000291917" description="Tetratricopeptide repeat protein 21B">
    <location>
        <begin position="1"/>
        <end position="1316"/>
    </location>
</feature>
<feature type="repeat" description="TPR 1">
    <location>
        <begin position="108"/>
        <end position="141"/>
    </location>
</feature>
<feature type="repeat" description="TPR 2">
    <location>
        <begin position="145"/>
        <end position="178"/>
    </location>
</feature>
<feature type="repeat" description="TPR 3">
    <location>
        <begin position="180"/>
        <end position="211"/>
    </location>
</feature>
<feature type="repeat" description="TPR 4">
    <location>
        <begin position="285"/>
        <end position="323"/>
    </location>
</feature>
<feature type="repeat" description="TPR 5">
    <location>
        <begin position="324"/>
        <end position="357"/>
    </location>
</feature>
<feature type="repeat" description="TPR 6">
    <location>
        <begin position="492"/>
        <end position="525"/>
    </location>
</feature>
<feature type="repeat" description="TPR 7">
    <location>
        <begin position="563"/>
        <end position="596"/>
    </location>
</feature>
<feature type="repeat" description="TPR 8">
    <location>
        <begin position="617"/>
        <end position="650"/>
    </location>
</feature>
<feature type="repeat" description="TPR 9">
    <location>
        <begin position="722"/>
        <end position="755"/>
    </location>
</feature>
<feature type="repeat" description="TPR 10">
    <location>
        <begin position="757"/>
        <end position="789"/>
    </location>
</feature>
<feature type="repeat" description="TPR 11">
    <location>
        <begin position="791"/>
        <end position="822"/>
    </location>
</feature>
<feature type="repeat" description="TPR 12">
    <location>
        <begin position="831"/>
        <end position="864"/>
    </location>
</feature>
<feature type="repeat" description="TPR 13">
    <location>
        <begin position="884"/>
        <end position="917"/>
    </location>
</feature>
<feature type="repeat" description="TPR 14">
    <location>
        <begin position="919"/>
        <end position="951"/>
    </location>
</feature>
<feature type="repeat" description="TPR 15">
    <location>
        <begin position="952"/>
        <end position="985"/>
    </location>
</feature>
<feature type="repeat" description="TPR 16">
    <location>
        <begin position="1023"/>
        <end position="1056"/>
    </location>
</feature>
<feature type="repeat" description="TPR 17">
    <location>
        <begin position="1197"/>
        <end position="1230"/>
    </location>
</feature>
<feature type="repeat" description="TPR 18">
    <location>
        <begin position="1232"/>
        <end position="1264"/>
    </location>
</feature>
<feature type="repeat" description="TPR 19">
    <location>
        <begin position="1266"/>
        <end position="1299"/>
    </location>
</feature>
<feature type="splice variant" id="VSP_026306" description="In isoform 2." evidence="11">
    <original>PASPGQPLCPLLRRCISVLE</original>
    <variation>VSNYGTYFQGCVYLMFYERT</variation>
    <location>
        <begin position="463"/>
        <end position="482"/>
    </location>
</feature>
<feature type="splice variant" id="VSP_026307" description="In isoform 2." evidence="11">
    <location>
        <begin position="483"/>
        <end position="1316"/>
    </location>
</feature>
<feature type="sequence variant" id="VAR_065514" description="Found in a patient with Meckel-Gruber like syndrome also carrying variant C-671 in BBS7; uncertain significance; hypomorphic variant in vitro; dbSNP:rs371571631." evidence="6">
    <original>F</original>
    <variation>Y</variation>
    <location>
        <position position="60"/>
    </location>
</feature>
<feature type="sequence variant" id="VAR_065515" evidence="6">
    <original>K</original>
    <variation>R</variation>
    <location>
        <position position="66"/>
    </location>
</feature>
<feature type="sequence variant" id="VAR_065516" description="In NPHP12; with extra-renal features; functionally null mutation in vitro." evidence="6">
    <original>W</original>
    <variation>R</variation>
    <location>
        <position position="150"/>
    </location>
</feature>
<feature type="sequence variant" id="VAR_065517" description="Found in a patient with Bardet-Biedl syndrome; probably acts as a disease modifier; the patient also carries a frameshift mutation and variant M-501 in BBS12; hypomorphic variant in vitro." evidence="6">
    <original>K</original>
    <variation>E</variation>
    <location>
        <position position="157"/>
    </location>
</feature>
<feature type="sequence variant" id="VAR_032888" description="In dbSNP:rs1432273." evidence="2 3 4">
    <original>V</original>
    <variation>M</variation>
    <location>
        <position position="201"/>
    </location>
</feature>
<feature type="sequence variant" id="VAR_065518" description="In NPHP12; also found in a patient with Bardet-Biedl syndrome carrying two variants in BBS4; hypomorphic variant in vitro; dbSNP:rs140511594." evidence="6">
    <original>P</original>
    <variation>L</variation>
    <location>
        <position position="209"/>
    </location>
</feature>
<feature type="sequence variant" id="VAR_065519" description="Found in a patient with Meckel-Gruber like syndrome also carrying variant V-280 on the same allele and variant G-1183 in RPGRIP1L; uncertain significance; hypomorphic variant in vitro; dbSNP:rs80026831." evidence="6">
    <original>Q</original>
    <variation>L</variation>
    <location>
        <position position="222"/>
    </location>
</feature>
<feature type="sequence variant" id="VAR_065520" description="In SRTD4 and NPHP12; also found in a patient with Bardet-Biedl syndrome carrying variants L-159 and T-346 in BBS12; also found in a patient with Meckel-Gruber syndrome carrying a homozygous variant in TMEM216; hypomorphic variant in vitro; dbSNP:rs149925563." evidence="6">
    <original>T</original>
    <variation>S</variation>
    <location>
        <position position="231"/>
    </location>
</feature>
<feature type="sequence variant" id="VAR_065521" description="In dbSNP:rs74447004." evidence="6">
    <original>D</original>
    <variation>N</variation>
    <location>
        <position position="242"/>
    </location>
</feature>
<feature type="sequence variant" id="VAR_065522" description="Found in a patient with Bardet-Biedl syndrome; probably acts as a disease modifier; the patient also carries a frameshift mutation and variant P-34 in BBS10; hypomorphic variant in vitro; dbSNP:rs377061787." evidence="6">
    <original>Y</original>
    <variation>C</variation>
    <location>
        <position position="255"/>
    </location>
</feature>
<feature type="sequence variant" id="VAR_032889" description="In dbSNP:rs7592429." evidence="2 3 4">
    <original>T</original>
    <variation>A</variation>
    <location>
        <position position="276"/>
    </location>
</feature>
<feature type="sequence variant" id="VAR_065523" description="Found in a patient with Meckel-Gruber like syndrome also carrying L-222 on the same allele and variant G-1183 in RPGRIP1L; uncertain significance; hypomorphic variant in vitro; dbSNP:rs112868646." evidence="6">
    <original>M</original>
    <variation>V</variation>
    <location>
        <position position="280"/>
    </location>
</feature>
<feature type="sequence variant" id="VAR_065524" description="Found in a patient with Meckel-Gruber syndrome also carrying a mutation in CC2D2A; uncertain significance; hypomorphic variant in vitro." evidence="6">
    <original>A</original>
    <variation>S</variation>
    <location>
        <position position="327"/>
    </location>
</feature>
<feature type="sequence variant" id="VAR_065525" description="Found in a patient with Meckel-Gruber syndrome also carrying N-1041 on the same allele; uncertain significance; hypomorphic variant in vitro; dbSNP:rs779121249." evidence="6">
    <original>Y</original>
    <variation>C</variation>
    <location>
        <position position="347"/>
    </location>
</feature>
<feature type="sequence variant" id="VAR_065526" description="Found in a patient with Bardet-Biedl syndrome; probably acts as a disease modifier; the patient also carries a homozygous frameshift mutation in BBS7; hypomorphic variant in vitro; dbSNP:rs185089786." evidence="6">
    <original>R</original>
    <variation>G</variation>
    <location>
        <position position="411"/>
    </location>
</feature>
<feature type="sequence variant" id="VAR_065527" description="In dbSNP:rs199873923." evidence="6">
    <original>Q</original>
    <variation>R</variation>
    <location>
        <position position="412"/>
    </location>
</feature>
<feature type="sequence variant" id="VAR_065528" description="In dbSNP:rs533077805." evidence="6">
    <original>D</original>
    <variation>E</variation>
    <location>
        <position position="424"/>
    </location>
</feature>
<feature type="sequence variant" id="VAR_032890" description="In dbSNP:rs16851307.">
    <original>P</original>
    <variation>S</variation>
    <location>
        <position position="463"/>
    </location>
</feature>
<feature type="sequence variant" id="VAR_032891" description="In dbSNP:rs2163649.">
    <original>L</original>
    <variation>F</variation>
    <location>
        <position position="473"/>
    </location>
</feature>
<feature type="sequence variant" id="VAR_065529" description="In NPHP12; uncertain significance; functionally null mutation in vitro; dbSNP:rs146320075." evidence="6">
    <original>H</original>
    <variation>R</variation>
    <location>
        <position position="566"/>
    </location>
</feature>
<feature type="sequence variant" id="VAR_065530" description="In JBTS11; hypomorphic variant in vitro." evidence="6">
    <original>S</original>
    <variation>N</variation>
    <location>
        <position position="591"/>
    </location>
</feature>
<feature type="sequence variant" id="VAR_065531" description="In dbSNP:rs139441507." evidence="6">
    <original>R</original>
    <variation>C</variation>
    <location>
        <position position="616"/>
    </location>
</feature>
<feature type="sequence variant" id="VAR_065532" description="In dbSNP:rs77106136." evidence="6">
    <original>I</original>
    <variation>V</variation>
    <location>
        <position position="624"/>
    </location>
</feature>
<feature type="sequence variant" id="VAR_065533" description="In dbSNP:rs200291881." evidence="6">
    <original>H</original>
    <variation>R</variation>
    <location>
        <position position="645"/>
    </location>
</feature>
<feature type="sequence variant" id="VAR_065534" description="In dbSNP:rs759317777." evidence="6">
    <original>S</original>
    <variation>T</variation>
    <location>
        <position position="724"/>
    </location>
</feature>
<feature type="sequence variant" id="VAR_065535" description="Found in a patient with Meckel-Gruber like syndrome carrying variant D-559 in BBS1 and a variant in CC2D2A; uncertain significance; functionally null mutation in vitro; dbSNP:rs539769126." evidence="6">
    <original>P</original>
    <variation>L</variation>
    <location>
        <position position="753"/>
    </location>
</feature>
<feature type="sequence variant" id="VAR_065536" description="In SRTD4; functionally null mutation in vitro." evidence="6">
    <original>D</original>
    <variation>Y</variation>
    <location>
        <position position="755"/>
    </location>
</feature>
<feature type="sequence variant" id="VAR_065537" description="In SRTD4; functionally null mutation in vitro; dbSNP:rs387907060." evidence="6">
    <original>L</original>
    <variation>P</variation>
    <location>
        <position position="795"/>
    </location>
</feature>
<feature type="sequence variant" id="VAR_065538" description="Found in a patient with Meckel-Gruber syndrome; uncertain significance; functionally null mutation in vitro; dbSNP:rs766811699." evidence="6">
    <original>M</original>
    <variation>V</variation>
    <location>
        <position position="844"/>
    </location>
</feature>
<feature type="sequence variant" id="VAR_032892" description="In dbSNP:rs7595010.">
    <original>K</original>
    <variation>R</variation>
    <location>
        <position position="846"/>
    </location>
</feature>
<feature type="sequence variant" id="VAR_065539" description="In JBTS11; functionally null mutation in vitro; dbSNP:rs746700857." evidence="6">
    <original>R</original>
    <variation>C</variation>
    <location>
        <position position="867"/>
    </location>
</feature>
<feature type="sequence variant" id="VAR_065540" description="Found in a patient with Meckel-Gruber syndrome also carrying a homozygous variant in CC2D2A; also found in a patient with short-rib thoracic dysplasia without polydactyly compoud heterozygous for causative mutations in IFT81; probably acts as a disease modifier; functionally null mutation in vitro; dbSNP:rs76726265." evidence="6 9">
    <original>R</original>
    <variation>H</variation>
    <location>
        <position position="867"/>
    </location>
</feature>
<feature type="sequence variant" id="VAR_065541" description="Found in a patient with Meckel-Gruber like syndrome; uncertain significance; hypomorphic variant in vitro; dbSNP:rs137926033." evidence="6">
    <original>Q</original>
    <variation>R</variation>
    <location>
        <position position="869"/>
    </location>
</feature>
<feature type="sequence variant" id="VAR_065542" description="Hypomorphic variant in vitro; dbSNP:rs751382210." evidence="6">
    <original>R</original>
    <variation>Q</variation>
    <location>
        <position position="939"/>
    </location>
</feature>
<feature type="sequence variant" id="VAR_065543" description="Functionally null mutation in vitro; dbSNP:rs151227843." evidence="6">
    <original>R</original>
    <variation>W</variation>
    <location>
        <position position="939"/>
    </location>
</feature>
<feature type="sequence variant" id="VAR_065544" description="Found in a patient with Meckel-Gruber like syndrome; uncertain significance; also found in patients with Bardet-Bied syndrome; uncertain significance; also found in a patient with nephronophthisis with extra-renal features; uncertain significance; hypomorphic variant in vitro; dbSNP:rs146496725." evidence="6">
    <original>L</original>
    <variation>V</variation>
    <location>
        <position position="1002"/>
    </location>
</feature>
<feature type="sequence variant" id="VAR_068172" description="In JBTS11; dbSNP:rs777427926." evidence="7">
    <original>M</original>
    <variation>T</variation>
    <location>
        <position position="1011"/>
    </location>
</feature>
<feature type="sequence variant" id="VAR_065545" description="In dbSNP:rs761842893." evidence="6">
    <original>M</original>
    <variation>V</variation>
    <location>
        <position position="1011"/>
    </location>
</feature>
<feature type="sequence variant" id="VAR_065546" description="In dbSNP:rs757541819." evidence="6">
    <original>Y</original>
    <variation>C</variation>
    <location>
        <position position="1035"/>
    </location>
</feature>
<feature type="sequence variant" id="VAR_065547" description="Found in a patient with Meckel-Gruber syndrome also carrying C-347 on the same allele; uncertain significance; functionally null mutation in vitro." evidence="6">
    <original>D</original>
    <variation>N</variation>
    <location>
        <position position="1041"/>
    </location>
</feature>
<feature type="sequence variant" id="VAR_065548" description="Found in a patient with Bardet-Biedl syndrome; probably acts as a disease modifier; the patient also carries two mutations in BBS6; hypomorphic variant in vitro; dbSNP:rs1482808126." evidence="6">
    <original>T</original>
    <variation>R</variation>
    <location>
        <position position="1103"/>
    </location>
</feature>
<feature type="sequence variant" id="VAR_065549" description="In NPHP12; hypomorphic variant in vitro; dbSNP:rs1040877016." evidence="6">
    <original>Y</original>
    <variation>C</variation>
    <location>
        <position position="1167"/>
    </location>
</feature>
<feature type="sequence variant" id="VAR_065550" description="In JBTS11; hypomorphic variant in vitro; dbSNP:rs376308209." evidence="6">
    <original>M</original>
    <variation>V</variation>
    <location>
        <position position="1186"/>
    </location>
</feature>
<feature type="sequence variant" id="VAR_065551" description="Found in a patient with Bardet-Biedl syndrome; probably acts as a disease modifier; the patients also carries two mutations in BBS1; functionally null mutation in vitro; dbSNP:rs189519760." evidence="6">
    <original>I</original>
    <variation>S</variation>
    <location>
        <position position="1208"/>
    </location>
</feature>
<feature type="sequence variant" id="VAR_065552" description="In dbSNP:rs139537546." evidence="6">
    <original>D</original>
    <variation>H</variation>
    <location>
        <position position="1284"/>
    </location>
</feature>
<feature type="sequence variant" id="VAR_065553" evidence="6">
    <original>R</original>
    <variation>G</variation>
    <location>
        <position position="1311"/>
    </location>
</feature>
<feature type="sequence conflict" description="In Ref. 1; BAE45724." evidence="14" ref="1">
    <original>D</original>
    <variation>N</variation>
    <location>
        <position position="227"/>
    </location>
</feature>
<feature type="sequence conflict" description="In Ref. 4; BAB71404." evidence="14" ref="4">
    <original>D</original>
    <variation>G</variation>
    <location>
        <position position="669"/>
    </location>
</feature>
<feature type="sequence conflict" description="In Ref. 4; BAB13836." evidence="14" ref="4">
    <original>N</original>
    <variation>D</variation>
    <location>
        <position position="1187"/>
    </location>
</feature>
<feature type="helix" evidence="17">
    <location>
        <begin position="3"/>
        <end position="15"/>
    </location>
</feature>
<feature type="helix" evidence="17">
    <location>
        <begin position="19"/>
        <end position="32"/>
    </location>
</feature>
<feature type="helix" evidence="17">
    <location>
        <begin position="37"/>
        <end position="50"/>
    </location>
</feature>
<feature type="helix" evidence="17">
    <location>
        <begin position="53"/>
        <end position="61"/>
    </location>
</feature>
<feature type="turn" evidence="17">
    <location>
        <begin position="62"/>
        <end position="65"/>
    </location>
</feature>
<feature type="turn" evidence="17">
    <location>
        <begin position="67"/>
        <end position="69"/>
    </location>
</feature>
<feature type="helix" evidence="17">
    <location>
        <begin position="70"/>
        <end position="83"/>
    </location>
</feature>
<feature type="strand" evidence="17">
    <location>
        <begin position="84"/>
        <end position="86"/>
    </location>
</feature>
<feature type="helix" evidence="17">
    <location>
        <begin position="89"/>
        <end position="105"/>
    </location>
</feature>
<feature type="helix" evidence="17">
    <location>
        <begin position="108"/>
        <end position="120"/>
    </location>
</feature>
<feature type="helix" evidence="17">
    <location>
        <begin position="124"/>
        <end position="138"/>
    </location>
</feature>
<feature type="helix" evidence="17">
    <location>
        <begin position="142"/>
        <end position="154"/>
    </location>
</feature>
<feature type="helix" evidence="17">
    <location>
        <begin position="159"/>
        <end position="172"/>
    </location>
</feature>
<feature type="helix" evidence="17">
    <location>
        <begin position="178"/>
        <end position="190"/>
    </location>
</feature>
<feature type="helix" evidence="17">
    <location>
        <begin position="194"/>
        <end position="207"/>
    </location>
</feature>
<feature type="helix" evidence="17">
    <location>
        <begin position="212"/>
        <end position="224"/>
    </location>
</feature>
<feature type="helix" evidence="17">
    <location>
        <begin position="228"/>
        <end position="239"/>
    </location>
</feature>
<feature type="helix" evidence="17">
    <location>
        <begin position="246"/>
        <end position="258"/>
    </location>
</feature>
<feature type="helix" evidence="17">
    <location>
        <begin position="263"/>
        <end position="279"/>
    </location>
</feature>
<feature type="helix" evidence="17">
    <location>
        <begin position="285"/>
        <end position="298"/>
    </location>
</feature>
<feature type="helix" evidence="17">
    <location>
        <begin position="303"/>
        <end position="319"/>
    </location>
</feature>
<feature type="helix" evidence="17">
    <location>
        <begin position="324"/>
        <end position="336"/>
    </location>
</feature>
<feature type="helix" evidence="17">
    <location>
        <begin position="340"/>
        <end position="353"/>
    </location>
</feature>
<feature type="helix" evidence="17">
    <location>
        <begin position="358"/>
        <end position="371"/>
    </location>
</feature>
<feature type="helix" evidence="17">
    <location>
        <begin position="374"/>
        <end position="387"/>
    </location>
</feature>
<feature type="helix" evidence="17">
    <location>
        <begin position="388"/>
        <end position="390"/>
    </location>
</feature>
<feature type="helix" evidence="17">
    <location>
        <begin position="395"/>
        <end position="407"/>
    </location>
</feature>
<feature type="helix" evidence="17">
    <location>
        <begin position="412"/>
        <end position="429"/>
    </location>
</feature>
<feature type="helix" evidence="17">
    <location>
        <begin position="437"/>
        <end position="443"/>
    </location>
</feature>
<feature type="helix" evidence="17">
    <location>
        <begin position="445"/>
        <end position="458"/>
    </location>
</feature>
<feature type="helix" evidence="17">
    <location>
        <begin position="471"/>
        <end position="487"/>
    </location>
</feature>
<feature type="helix" evidence="17">
    <location>
        <begin position="493"/>
        <end position="504"/>
    </location>
</feature>
<feature type="helix" evidence="17">
    <location>
        <begin position="508"/>
        <end position="521"/>
    </location>
</feature>
<feature type="helix" evidence="17">
    <location>
        <begin position="526"/>
        <end position="538"/>
    </location>
</feature>
<feature type="helix" evidence="17">
    <location>
        <begin position="542"/>
        <end position="555"/>
    </location>
</feature>
<feature type="helix" evidence="17">
    <location>
        <begin position="557"/>
        <end position="561"/>
    </location>
</feature>
<feature type="helix" evidence="17">
    <location>
        <begin position="563"/>
        <end position="575"/>
    </location>
</feature>
<feature type="helix" evidence="17">
    <location>
        <begin position="579"/>
        <end position="591"/>
    </location>
</feature>
<feature type="helix" evidence="17">
    <location>
        <begin position="613"/>
        <end position="629"/>
    </location>
</feature>
<feature type="helix" evidence="17">
    <location>
        <begin position="633"/>
        <end position="646"/>
    </location>
</feature>
<feature type="turn" evidence="17">
    <location>
        <begin position="647"/>
        <end position="649"/>
    </location>
</feature>
<feature type="helix" evidence="17">
    <location>
        <begin position="652"/>
        <end position="666"/>
    </location>
</feature>
<feature type="helix" evidence="16">
    <location>
        <begin position="670"/>
        <end position="678"/>
    </location>
</feature>
<feature type="helix" evidence="16">
    <location>
        <begin position="687"/>
        <end position="700"/>
    </location>
</feature>
<feature type="helix" evidence="16">
    <location>
        <begin position="705"/>
        <end position="718"/>
    </location>
</feature>
<feature type="helix" evidence="16">
    <location>
        <begin position="722"/>
        <end position="734"/>
    </location>
</feature>
<feature type="helix" evidence="16">
    <location>
        <begin position="738"/>
        <end position="749"/>
    </location>
</feature>
<feature type="helix" evidence="16">
    <location>
        <begin position="756"/>
        <end position="768"/>
    </location>
</feature>
<feature type="helix" evidence="16">
    <location>
        <begin position="772"/>
        <end position="784"/>
    </location>
</feature>
<feature type="helix" evidence="16">
    <location>
        <begin position="791"/>
        <end position="801"/>
    </location>
</feature>
<feature type="helix" evidence="16">
    <location>
        <begin position="805"/>
        <end position="814"/>
    </location>
</feature>
<feature type="helix" evidence="16">
    <location>
        <begin position="824"/>
        <end position="843"/>
    </location>
</feature>
<feature type="helix" evidence="16">
    <location>
        <begin position="847"/>
        <end position="871"/>
    </location>
</feature>
<feature type="helix" evidence="16">
    <location>
        <begin position="873"/>
        <end position="875"/>
    </location>
</feature>
<feature type="helix" evidence="16">
    <location>
        <begin position="876"/>
        <end position="896"/>
    </location>
</feature>
<feature type="helix" evidence="16">
    <location>
        <begin position="900"/>
        <end position="913"/>
    </location>
</feature>
<feature type="helix" evidence="16">
    <location>
        <begin position="918"/>
        <end position="930"/>
    </location>
</feature>
<feature type="helix" evidence="16">
    <location>
        <begin position="934"/>
        <end position="947"/>
    </location>
</feature>
<feature type="helix" evidence="16">
    <location>
        <begin position="952"/>
        <end position="964"/>
    </location>
</feature>
<feature type="helix" evidence="16">
    <location>
        <begin position="968"/>
        <end position="981"/>
    </location>
</feature>
<feature type="helix" evidence="16">
    <location>
        <begin position="986"/>
        <end position="999"/>
    </location>
</feature>
<feature type="helix" evidence="16">
    <location>
        <begin position="1002"/>
        <end position="1005"/>
    </location>
</feature>
<feature type="helix" evidence="16">
    <location>
        <begin position="1006"/>
        <end position="1015"/>
    </location>
</feature>
<feature type="helix" evidence="16">
    <location>
        <begin position="1019"/>
        <end position="1021"/>
    </location>
</feature>
<feature type="helix" evidence="16">
    <location>
        <begin position="1023"/>
        <end position="1036"/>
    </location>
</feature>
<feature type="helix" evidence="16">
    <location>
        <begin position="1039"/>
        <end position="1049"/>
    </location>
</feature>
<feature type="helix" evidence="16">
    <location>
        <begin position="1055"/>
        <end position="1068"/>
    </location>
</feature>
<feature type="helix" evidence="16">
    <location>
        <begin position="1078"/>
        <end position="1081"/>
    </location>
</feature>
<feature type="helix" evidence="16">
    <location>
        <begin position="1085"/>
        <end position="1088"/>
    </location>
</feature>
<feature type="helix" evidence="16">
    <location>
        <begin position="1091"/>
        <end position="1110"/>
    </location>
</feature>
<feature type="helix" evidence="16">
    <location>
        <begin position="1116"/>
        <end position="1132"/>
    </location>
</feature>
<feature type="helix" evidence="16">
    <location>
        <begin position="1136"/>
        <end position="1152"/>
    </location>
</feature>
<feature type="helix" evidence="16">
    <location>
        <begin position="1157"/>
        <end position="1169"/>
    </location>
</feature>
<feature type="helix" evidence="16">
    <location>
        <begin position="1173"/>
        <end position="1184"/>
    </location>
</feature>
<feature type="turn" evidence="16">
    <location>
        <begin position="1190"/>
        <end position="1192"/>
    </location>
</feature>
<feature type="helix" evidence="16">
    <location>
        <begin position="1193"/>
        <end position="1209"/>
    </location>
</feature>
<feature type="helix" evidence="16">
    <location>
        <begin position="1213"/>
        <end position="1226"/>
    </location>
</feature>
<feature type="helix" evidence="16">
    <location>
        <begin position="1231"/>
        <end position="1243"/>
    </location>
</feature>
<feature type="helix" evidence="16">
    <location>
        <begin position="1247"/>
        <end position="1260"/>
    </location>
</feature>
<feature type="turn" evidence="16">
    <location>
        <begin position="1261"/>
        <end position="1263"/>
    </location>
</feature>
<feature type="helix" evidence="16">
    <location>
        <begin position="1266"/>
        <end position="1278"/>
    </location>
</feature>
<feature type="helix" evidence="16">
    <location>
        <begin position="1282"/>
        <end position="1295"/>
    </location>
</feature>
<feature type="helix" evidence="16">
    <location>
        <begin position="1302"/>
        <end position="1314"/>
    </location>
</feature>
<gene>
    <name evidence="15" type="primary">TTC21B</name>
    <name evidence="12 13" type="synonym">IFT139</name>
    <name type="synonym">KIAA1992</name>
    <name type="ORF">Nbla10696</name>
</gene>
<dbReference type="EMBL" id="AB073395">
    <property type="protein sequence ID" value="BAE45724.1"/>
    <property type="molecule type" value="mRNA"/>
</dbReference>
<dbReference type="EMBL" id="AC010127">
    <property type="status" value="NOT_ANNOTATED_CDS"/>
    <property type="molecule type" value="Genomic_DNA"/>
</dbReference>
<dbReference type="EMBL" id="AC011241">
    <property type="protein sequence ID" value="AAY14750.1"/>
    <property type="status" value="ALT_SEQ"/>
    <property type="molecule type" value="Genomic_DNA"/>
</dbReference>
<dbReference type="EMBL" id="BC035767">
    <property type="protein sequence ID" value="AAH35767.1"/>
    <property type="molecule type" value="mRNA"/>
</dbReference>
<dbReference type="EMBL" id="BC055424">
    <property type="protein sequence ID" value="AAH55424.1"/>
    <property type="molecule type" value="mRNA"/>
</dbReference>
<dbReference type="EMBL" id="BC063579">
    <property type="protein sequence ID" value="AAH63579.1"/>
    <property type="molecule type" value="mRNA"/>
</dbReference>
<dbReference type="EMBL" id="AK021519">
    <property type="protein sequence ID" value="BAB13836.1"/>
    <property type="status" value="ALT_INIT"/>
    <property type="molecule type" value="mRNA"/>
</dbReference>
<dbReference type="EMBL" id="AK057268">
    <property type="protein sequence ID" value="BAB71404.1"/>
    <property type="molecule type" value="mRNA"/>
</dbReference>
<dbReference type="EMBL" id="AB082523">
    <property type="protein sequence ID" value="BAC02701.1"/>
    <property type="molecule type" value="mRNA"/>
</dbReference>
<dbReference type="CCDS" id="CCDS33315.1">
    <molecule id="Q7Z4L5-1"/>
</dbReference>
<dbReference type="RefSeq" id="NP_079029.3">
    <molecule id="Q7Z4L5-1"/>
    <property type="nucleotide sequence ID" value="NM_024753.4"/>
</dbReference>
<dbReference type="PDB" id="8BBE">
    <property type="method" value="EM"/>
    <property type="resolution" value="3.50 A"/>
    <property type="chains" value="D=1-1316"/>
</dbReference>
<dbReference type="PDB" id="8BBG">
    <property type="method" value="EM"/>
    <property type="resolution" value="3.50 A"/>
    <property type="chains" value="D=1-1316"/>
</dbReference>
<dbReference type="PDB" id="8FGW">
    <property type="method" value="EM"/>
    <property type="resolution" value="3.70 A"/>
    <property type="chains" value="D=1-1316"/>
</dbReference>
<dbReference type="PDBsum" id="8BBE"/>
<dbReference type="PDBsum" id="8BBG"/>
<dbReference type="PDBsum" id="8FGW"/>
<dbReference type="EMDB" id="EMD-15954"/>
<dbReference type="EMDB" id="EMD-29073"/>
<dbReference type="SMR" id="Q7Z4L5"/>
<dbReference type="BioGRID" id="122904">
    <property type="interactions" value="19"/>
</dbReference>
<dbReference type="ComplexPortal" id="CPX-5021">
    <property type="entry name" value="Intraflagellar transport complex A"/>
</dbReference>
<dbReference type="CORUM" id="Q7Z4L5"/>
<dbReference type="FunCoup" id="Q7Z4L5">
    <property type="interactions" value="488"/>
</dbReference>
<dbReference type="IntAct" id="Q7Z4L5">
    <property type="interactions" value="15"/>
</dbReference>
<dbReference type="MINT" id="Q7Z4L5"/>
<dbReference type="STRING" id="9606.ENSP00000243344"/>
<dbReference type="GlyGen" id="Q7Z4L5">
    <property type="glycosylation" value="1 site, 1 O-linked glycan (1 site)"/>
</dbReference>
<dbReference type="iPTMnet" id="Q7Z4L5"/>
<dbReference type="PhosphoSitePlus" id="Q7Z4L5"/>
<dbReference type="BioMuta" id="TTC21B"/>
<dbReference type="DMDM" id="313104038"/>
<dbReference type="jPOST" id="Q7Z4L5"/>
<dbReference type="MassIVE" id="Q7Z4L5"/>
<dbReference type="PaxDb" id="9606-ENSP00000243344"/>
<dbReference type="PeptideAtlas" id="Q7Z4L5"/>
<dbReference type="ProteomicsDB" id="69206">
    <molecule id="Q7Z4L5-1"/>
</dbReference>
<dbReference type="ProteomicsDB" id="69207">
    <molecule id="Q7Z4L5-2"/>
</dbReference>
<dbReference type="Pumba" id="Q7Z4L5"/>
<dbReference type="Antibodypedia" id="47994">
    <property type="antibodies" value="46 antibodies from 8 providers"/>
</dbReference>
<dbReference type="DNASU" id="79809"/>
<dbReference type="Ensembl" id="ENST00000243344.8">
    <molecule id="Q7Z4L5-1"/>
    <property type="protein sequence ID" value="ENSP00000243344.7"/>
    <property type="gene ID" value="ENSG00000123607.16"/>
</dbReference>
<dbReference type="Ensembl" id="ENST00000680888.1">
    <molecule id="Q7Z4L5-1"/>
    <property type="protein sequence ID" value="ENSP00000506276.1"/>
    <property type="gene ID" value="ENSG00000123607.16"/>
</dbReference>
<dbReference type="Ensembl" id="ENST00000681952.1">
    <molecule id="Q7Z4L5-1"/>
    <property type="protein sequence ID" value="ENSP00000506400.1"/>
    <property type="gene ID" value="ENSG00000123607.16"/>
</dbReference>
<dbReference type="GeneID" id="79809"/>
<dbReference type="KEGG" id="hsa:79809"/>
<dbReference type="MANE-Select" id="ENST00000243344.8">
    <property type="protein sequence ID" value="ENSP00000243344.7"/>
    <property type="RefSeq nucleotide sequence ID" value="NM_024753.5"/>
    <property type="RefSeq protein sequence ID" value="NP_079029.3"/>
</dbReference>
<dbReference type="UCSC" id="uc002udk.4">
    <molecule id="Q7Z4L5-1"/>
    <property type="organism name" value="human"/>
</dbReference>
<dbReference type="AGR" id="HGNC:25660"/>
<dbReference type="CTD" id="79809"/>
<dbReference type="DisGeNET" id="79809"/>
<dbReference type="GeneCards" id="TTC21B"/>
<dbReference type="GeneReviews" id="TTC21B"/>
<dbReference type="HGNC" id="HGNC:25660">
    <property type="gene designation" value="TTC21B"/>
</dbReference>
<dbReference type="HPA" id="ENSG00000123607">
    <property type="expression patterns" value="Low tissue specificity"/>
</dbReference>
<dbReference type="MalaCards" id="TTC21B"/>
<dbReference type="MIM" id="612014">
    <property type="type" value="gene"/>
</dbReference>
<dbReference type="MIM" id="613819">
    <property type="type" value="phenotype"/>
</dbReference>
<dbReference type="MIM" id="613820">
    <property type="type" value="phenotype"/>
</dbReference>
<dbReference type="neXtProt" id="NX_Q7Z4L5"/>
<dbReference type="OpenTargets" id="ENSG00000123607"/>
<dbReference type="Orphanet" id="93591">
    <property type="disease" value="Infantile nephronophthisis"/>
</dbReference>
<dbReference type="Orphanet" id="474">
    <property type="disease" value="Jeune syndrome"/>
</dbReference>
<dbReference type="PharmGKB" id="PA134882767"/>
<dbReference type="VEuPathDB" id="HostDB:ENSG00000123607"/>
<dbReference type="eggNOG" id="ENOG502QQAB">
    <property type="taxonomic scope" value="Eukaryota"/>
</dbReference>
<dbReference type="GeneTree" id="ENSGT00390000005979"/>
<dbReference type="HOGENOM" id="CLU_006149_0_0_1"/>
<dbReference type="InParanoid" id="Q7Z4L5"/>
<dbReference type="OMA" id="NATCVRA"/>
<dbReference type="OrthoDB" id="10259630at2759"/>
<dbReference type="PAN-GO" id="Q7Z4L5">
    <property type="GO annotations" value="3 GO annotations based on evolutionary models"/>
</dbReference>
<dbReference type="PhylomeDB" id="Q7Z4L5"/>
<dbReference type="TreeFam" id="TF314664"/>
<dbReference type="PathwayCommons" id="Q7Z4L5"/>
<dbReference type="Reactome" id="R-HSA-5610787">
    <property type="pathway name" value="Hedgehog 'off' state"/>
</dbReference>
<dbReference type="Reactome" id="R-HSA-5620924">
    <property type="pathway name" value="Intraflagellar transport"/>
</dbReference>
<dbReference type="SignaLink" id="Q7Z4L5"/>
<dbReference type="BioGRID-ORCS" id="79809">
    <property type="hits" value="12 hits in 1158 CRISPR screens"/>
</dbReference>
<dbReference type="ChiTaRS" id="TTC21B">
    <property type="organism name" value="human"/>
</dbReference>
<dbReference type="GenomeRNAi" id="79809"/>
<dbReference type="Pharos" id="Q7Z4L5">
    <property type="development level" value="Tbio"/>
</dbReference>
<dbReference type="PRO" id="PR:Q7Z4L5"/>
<dbReference type="Proteomes" id="UP000005640">
    <property type="component" value="Chromosome 2"/>
</dbReference>
<dbReference type="RNAct" id="Q7Z4L5">
    <property type="molecule type" value="protein"/>
</dbReference>
<dbReference type="Bgee" id="ENSG00000123607">
    <property type="expression patterns" value="Expressed in right uterine tube and 103 other cell types or tissues"/>
</dbReference>
<dbReference type="ExpressionAtlas" id="Q7Z4L5">
    <property type="expression patterns" value="baseline and differential"/>
</dbReference>
<dbReference type="GO" id="GO:0097542">
    <property type="term" value="C:ciliary tip"/>
    <property type="evidence" value="ECO:0000304"/>
    <property type="project" value="Reactome"/>
</dbReference>
<dbReference type="GO" id="GO:0005929">
    <property type="term" value="C:cilium"/>
    <property type="evidence" value="ECO:0000304"/>
    <property type="project" value="Reactome"/>
</dbReference>
<dbReference type="GO" id="GO:0005737">
    <property type="term" value="C:cytoplasm"/>
    <property type="evidence" value="ECO:0007669"/>
    <property type="project" value="UniProtKB-KW"/>
</dbReference>
<dbReference type="GO" id="GO:0005856">
    <property type="term" value="C:cytoskeleton"/>
    <property type="evidence" value="ECO:0007669"/>
    <property type="project" value="UniProtKB-KW"/>
</dbReference>
<dbReference type="GO" id="GO:0030991">
    <property type="term" value="C:intraciliary transport particle A"/>
    <property type="evidence" value="ECO:0000314"/>
    <property type="project" value="UniProtKB"/>
</dbReference>
<dbReference type="GO" id="GO:0003682">
    <property type="term" value="F:chromatin binding"/>
    <property type="evidence" value="ECO:0007669"/>
    <property type="project" value="Ensembl"/>
</dbReference>
<dbReference type="GO" id="GO:0060020">
    <property type="term" value="P:Bergmann glial cell differentiation"/>
    <property type="evidence" value="ECO:0007669"/>
    <property type="project" value="Ensembl"/>
</dbReference>
<dbReference type="GO" id="GO:0021702">
    <property type="term" value="P:cerebellar Purkinje cell differentiation"/>
    <property type="evidence" value="ECO:0007669"/>
    <property type="project" value="Ensembl"/>
</dbReference>
<dbReference type="GO" id="GO:0060271">
    <property type="term" value="P:cilium assembly"/>
    <property type="evidence" value="ECO:0000303"/>
    <property type="project" value="ComplexPortal"/>
</dbReference>
<dbReference type="GO" id="GO:0021798">
    <property type="term" value="P:forebrain dorsal/ventral pattern formation"/>
    <property type="evidence" value="ECO:0007669"/>
    <property type="project" value="Ensembl"/>
</dbReference>
<dbReference type="GO" id="GO:0035721">
    <property type="term" value="P:intraciliary retrograde transport"/>
    <property type="evidence" value="ECO:0000318"/>
    <property type="project" value="GO_Central"/>
</dbReference>
<dbReference type="GO" id="GO:1903999">
    <property type="term" value="P:negative regulation of eating behavior"/>
    <property type="evidence" value="ECO:0007669"/>
    <property type="project" value="Ensembl"/>
</dbReference>
<dbReference type="GO" id="GO:0090263">
    <property type="term" value="P:positive regulation of canonical Wnt signaling pathway"/>
    <property type="evidence" value="ECO:0007669"/>
    <property type="project" value="Ensembl"/>
</dbReference>
<dbReference type="GO" id="GO:0010628">
    <property type="term" value="P:positive regulation of gene expression"/>
    <property type="evidence" value="ECO:0007669"/>
    <property type="project" value="Ensembl"/>
</dbReference>
<dbReference type="GO" id="GO:0061512">
    <property type="term" value="P:protein localization to cilium"/>
    <property type="evidence" value="ECO:0000315"/>
    <property type="project" value="MGI"/>
</dbReference>
<dbReference type="GO" id="GO:0097499">
    <property type="term" value="P:protein localization to non-motile cilium"/>
    <property type="evidence" value="ECO:0007669"/>
    <property type="project" value="Ensembl"/>
</dbReference>
<dbReference type="GO" id="GO:1905799">
    <property type="term" value="P:regulation of intraciliary retrograde transport"/>
    <property type="evidence" value="ECO:0000315"/>
    <property type="project" value="UniProtKB"/>
</dbReference>
<dbReference type="GO" id="GO:0008589">
    <property type="term" value="P:regulation of smoothened signaling pathway"/>
    <property type="evidence" value="ECO:0007669"/>
    <property type="project" value="Ensembl"/>
</dbReference>
<dbReference type="GO" id="GO:0006357">
    <property type="term" value="P:regulation of transcription by RNA polymerase II"/>
    <property type="evidence" value="ECO:0000315"/>
    <property type="project" value="MGI"/>
</dbReference>
<dbReference type="GO" id="GO:0007224">
    <property type="term" value="P:smoothened signaling pathway"/>
    <property type="evidence" value="ECO:0007669"/>
    <property type="project" value="Ensembl"/>
</dbReference>
<dbReference type="GO" id="GO:0021591">
    <property type="term" value="P:ventricular system development"/>
    <property type="evidence" value="ECO:0007669"/>
    <property type="project" value="Ensembl"/>
</dbReference>
<dbReference type="FunFam" id="1.25.40.10:FF:000548">
    <property type="entry name" value="Tetratricopeptide repeat domain 21A"/>
    <property type="match status" value="1"/>
</dbReference>
<dbReference type="FunFam" id="1.25.40.10:FF:000219">
    <property type="entry name" value="Tetratricopeptide repeat domain 21B"/>
    <property type="match status" value="1"/>
</dbReference>
<dbReference type="FunFam" id="1.25.40.10:FF:000245">
    <property type="entry name" value="Tetratricopeptide repeat domain 21B"/>
    <property type="match status" value="1"/>
</dbReference>
<dbReference type="FunFam" id="1.25.40.10:FF:000493">
    <property type="entry name" value="Tetratricopeptide repeat domain 21B"/>
    <property type="match status" value="1"/>
</dbReference>
<dbReference type="Gene3D" id="1.25.40.10">
    <property type="entry name" value="Tetratricopeptide repeat domain"/>
    <property type="match status" value="5"/>
</dbReference>
<dbReference type="InterPro" id="IPR056832">
    <property type="entry name" value="ARM_TT21_2nd"/>
</dbReference>
<dbReference type="InterPro" id="IPR056836">
    <property type="entry name" value="ARM_TT21_4th"/>
</dbReference>
<dbReference type="InterPro" id="IPR056835">
    <property type="entry name" value="ARM_TT21_5th"/>
</dbReference>
<dbReference type="InterPro" id="IPR056834">
    <property type="entry name" value="ARM_TT21_C"/>
</dbReference>
<dbReference type="InterPro" id="IPR056833">
    <property type="entry name" value="ARM_TT21_N"/>
</dbReference>
<dbReference type="InterPro" id="IPR011990">
    <property type="entry name" value="TPR-like_helical_dom_sf"/>
</dbReference>
<dbReference type="InterPro" id="IPR019734">
    <property type="entry name" value="TPR_rpt"/>
</dbReference>
<dbReference type="InterPro" id="IPR040364">
    <property type="entry name" value="TTC21A/TTC21B"/>
</dbReference>
<dbReference type="PANTHER" id="PTHR14699">
    <property type="entry name" value="STI2 PROTEIN-RELATED"/>
    <property type="match status" value="1"/>
</dbReference>
<dbReference type="PANTHER" id="PTHR14699:SF1">
    <property type="entry name" value="TETRATRICOPEPTIDE REPEAT PROTEIN 21B"/>
    <property type="match status" value="1"/>
</dbReference>
<dbReference type="Pfam" id="PF25058">
    <property type="entry name" value="ARM_TT21"/>
    <property type="match status" value="1"/>
</dbReference>
<dbReference type="Pfam" id="PF25060">
    <property type="entry name" value="ARM_TT21_2nd"/>
    <property type="match status" value="1"/>
</dbReference>
<dbReference type="Pfam" id="PF25068">
    <property type="entry name" value="ARM_TT21_4th"/>
    <property type="match status" value="1"/>
</dbReference>
<dbReference type="Pfam" id="PF25064">
    <property type="entry name" value="ARM_TT21_5th"/>
    <property type="match status" value="1"/>
</dbReference>
<dbReference type="Pfam" id="PF25063">
    <property type="entry name" value="ARM_TT21_C"/>
    <property type="match status" value="1"/>
</dbReference>
<dbReference type="Pfam" id="PF25062">
    <property type="entry name" value="ARM_TT21_N"/>
    <property type="match status" value="1"/>
</dbReference>
<dbReference type="Pfam" id="PF13181">
    <property type="entry name" value="TPR_8"/>
    <property type="match status" value="1"/>
</dbReference>
<dbReference type="SMART" id="SM00028">
    <property type="entry name" value="TPR"/>
    <property type="match status" value="18"/>
</dbReference>
<dbReference type="SUPFAM" id="SSF81901">
    <property type="entry name" value="HCP-like"/>
    <property type="match status" value="1"/>
</dbReference>
<dbReference type="SUPFAM" id="SSF48452">
    <property type="entry name" value="TPR-like"/>
    <property type="match status" value="4"/>
</dbReference>
<dbReference type="PROSITE" id="PS50005">
    <property type="entry name" value="TPR"/>
    <property type="match status" value="10"/>
</dbReference>
<dbReference type="PROSITE" id="PS50293">
    <property type="entry name" value="TPR_REGION"/>
    <property type="match status" value="5"/>
</dbReference>
<evidence type="ECO:0000250" key="1">
    <source>
        <dbReference type="UniProtKB" id="Q0HA38"/>
    </source>
</evidence>
<evidence type="ECO:0000269" key="2">
    <source>
    </source>
</evidence>
<evidence type="ECO:0000269" key="3">
    <source>
    </source>
</evidence>
<evidence type="ECO:0000269" key="4">
    <source>
    </source>
</evidence>
<evidence type="ECO:0000269" key="5">
    <source>
    </source>
</evidence>
<evidence type="ECO:0000269" key="6">
    <source>
    </source>
</evidence>
<evidence type="ECO:0000269" key="7">
    <source>
    </source>
</evidence>
<evidence type="ECO:0000269" key="8">
    <source>
    </source>
</evidence>
<evidence type="ECO:0000269" key="9">
    <source>
    </source>
</evidence>
<evidence type="ECO:0000269" key="10">
    <source>
    </source>
</evidence>
<evidence type="ECO:0000303" key="11">
    <source>
    </source>
</evidence>
<evidence type="ECO:0000303" key="12">
    <source>
    </source>
</evidence>
<evidence type="ECO:0000303" key="13">
    <source>
    </source>
</evidence>
<evidence type="ECO:0000305" key="14"/>
<evidence type="ECO:0000312" key="15">
    <source>
        <dbReference type="HGNC" id="HGNC:25660"/>
    </source>
</evidence>
<evidence type="ECO:0007829" key="16">
    <source>
        <dbReference type="PDB" id="8BBE"/>
    </source>
</evidence>
<evidence type="ECO:0007829" key="17">
    <source>
        <dbReference type="PDB" id="8BBG"/>
    </source>
</evidence>
<sequence>MDSQELKTLINYYCQERYFHHVLLVASEGIKRYGSDPVFRFYHAYGTLMEGKTQEALREFEAIKNKQDVSLCSLLALIYAHKMSPNPDREAILESDARVKEQRKGAGEKALYHAGLFLWHIGRHDKAREYIDRMIKISDGSKQGHVLKAWLDITRGKEPYTKKALKYFEEGLQDGNDTFALLGKAQCLEMRQNYSGALETVNQIIVNFPSFLPAFVKKMKLQLALQDWDQTVETAQRLLLQDSQNVEALRMQALYYVCREGDIEKASTKLENLGNTLDAMEPQNAQLFYNITLAFSRTCGRSQLILQKIQTLLERAFSLNPQQSEFATELGYQMILQGRVKEALKWYKTAMTLDETSVSALVGFIQCQLIEGQLQDADQQLEFLNEIQQSIGKSAELIYLHAVLAMKKNKRQEEVINLLNDVLDTHFSQLEGLPLGIQYFEKLNPDFLLEIVMEYLSFCPMQPASPGQPLCPLLRRCISVLETVVRTVPGLLQTVFLIAKVKYLSGDIEAAFNNLQHCLEHNPSYADAHLLLAQVYLSQEKVKLCSQSLELCLSYDFKVRDYPLYHLIKAQSQKKMGEIADAIKTLHMAMSLPGMKRIGASTKSKDRKTEVDTSHRLSIFLELIDVHRLNGEQHEATKVLQDAIHEFSGTSEEVRVTIANADLALAQGDIERALSILQNVTAEQPYFIEAREKMADIYLKHRKDKMLYITCFREIAERMANPRSFLLLGDAYMNILEPEEAIVAYEQALNQNPKDGTLASKMGKALIKTHNYSMAITYYEAALKTGQKNYLCYDLAELLLKLKWYDKAEKVLQHALAHEPVNELSALMEDGRCQVLLAKVYSKMEKLGDAITALQQARELQARVLKRVQMEQPDAVPAQKHLAAEICAEIAKHSVAQRDYEKAIKFYREALVHCETDNKIMLELARLYLAQDDPDSCLRQCALLLQSDQDNEAATMMMADLMFRKQDYEQAVFHLQQLLERKPDNYMTLSRLIDLLRRCGKLEDVPRFFSMAEKRNSRAKLEPGFQYCKGLYLWYTGEPNDALRHFNKARKDRDWGQNALYNMIEICLNPDNETVGGEVFENLDGDLGNSTEKQESVQLAVRTAEKLLKELKPQTVQGHVQLRIMENYCLMATKQKSNVEQALNTFTEIAASEKEHIPALLGMATAYMILKQTPRARNQLKRIAKMNWNAIDAEEFEKSWLLLADIYIQSAKYDMAEDLLKRCLRHNRSCCKAYEYMGYIMEKEQAYTDAALNYEMAWKYSNRTNPAVGYKLAFNYLKAKRYVDSIDICHQVLEAHPTYPKIRKDILDKARASLRP</sequence>
<organism>
    <name type="scientific">Homo sapiens</name>
    <name type="common">Human</name>
    <dbReference type="NCBI Taxonomy" id="9606"/>
    <lineage>
        <taxon>Eukaryota</taxon>
        <taxon>Metazoa</taxon>
        <taxon>Chordata</taxon>
        <taxon>Craniata</taxon>
        <taxon>Vertebrata</taxon>
        <taxon>Euteleostomi</taxon>
        <taxon>Mammalia</taxon>
        <taxon>Eutheria</taxon>
        <taxon>Euarchontoglires</taxon>
        <taxon>Primates</taxon>
        <taxon>Haplorrhini</taxon>
        <taxon>Catarrhini</taxon>
        <taxon>Hominidae</taxon>
        <taxon>Homo</taxon>
    </lineage>
</organism>
<protein>
    <recommendedName>
        <fullName evidence="14">Tetratricopeptide repeat protein 21B</fullName>
        <shortName>TPR repeat protein 21B</shortName>
    </recommendedName>
    <alternativeName>
        <fullName evidence="14">Intraflagellar transport 139 homolog</fullName>
    </alternativeName>
</protein>
<keyword id="KW-0002">3D-structure</keyword>
<keyword id="KW-0025">Alternative splicing</keyword>
<keyword id="KW-0966">Cell projection</keyword>
<keyword id="KW-1186">Ciliopathy</keyword>
<keyword id="KW-0969">Cilium</keyword>
<keyword id="KW-0963">Cytoplasm</keyword>
<keyword id="KW-0206">Cytoskeleton</keyword>
<keyword id="KW-0225">Disease variant</keyword>
<keyword id="KW-0991">Intellectual disability</keyword>
<keyword id="KW-0979">Joubert syndrome</keyword>
<keyword id="KW-0981">Meckel syndrome</keyword>
<keyword id="KW-0983">Nephronophthisis</keyword>
<keyword id="KW-0550">Obesity</keyword>
<keyword id="KW-1267">Proteomics identification</keyword>
<keyword id="KW-1185">Reference proteome</keyword>
<keyword id="KW-0677">Repeat</keyword>
<keyword id="KW-0802">TPR repeat</keyword>
<comment type="function">
    <text evidence="1 10">Component of the IFT complex A (IFT-A), a complex required for retrograde ciliary transport and entry into cilia of G protein-coupled receptors (GPCRs). Essential for retrograde trafficking of IFT-1, IFT-B and GPCRs (PubMed:27932497). Negatively modulates the SHH signal transduction (By similarity).</text>
</comment>
<comment type="subunit">
    <text evidence="5 8 10">Component of the IFT complex A (IFT-A) complex (PubMed:20889716, PubMed:27932497). IFT-A complex is divided into a core subcomplex composed of IFT122:IFT140:WDR19 which is associated with TULP3 and a peripheral subcomplex composed of IFT43:WDR35:TTC21B (PubMed:27932497). Interacts directy with WDR35 and TTC21B (PubMed:27932497). Interacts with TTC25 (PubMed:25860617).</text>
</comment>
<comment type="interaction">
    <interactant intactId="EBI-2851301">
        <id>Q7Z4L5</id>
    </interactant>
    <interactant intactId="EBI-26854447">
        <id>Q9HBG6-3</id>
        <label>IFT122</label>
    </interactant>
    <organismsDiffer>false</organismsDiffer>
    <experiments>2</experiments>
</comment>
<comment type="subcellular location">
    <subcellularLocation>
        <location evidence="1">Cytoplasm</location>
        <location evidence="1">Cytoskeleton</location>
        <location evidence="1">Cilium axoneme</location>
    </subcellularLocation>
</comment>
<comment type="alternative products">
    <event type="alternative splicing"/>
    <isoform>
        <id>Q7Z4L5-1</id>
        <name>1</name>
        <sequence type="displayed"/>
    </isoform>
    <isoform>
        <id>Q7Z4L5-2</id>
        <name>2</name>
        <sequence type="described" ref="VSP_026306 VSP_026307"/>
    </isoform>
</comment>
<comment type="disease">
    <text evidence="6">Ciliary dysfunction leads to a broad spectrum of disorders, collectively termed ciliopathies. Overlapping clinical features include retinal degeneration, renal cystic disease, skeletal abnormalities, fibrosis of various organ, and a complex range of anatomical and functional defects of the central and peripheral nervous system. The ciliopathy range of diseases includes Meckel-Gruber syndrome, Bardet-Biedl syndrome, Joubert syndrome, nephronophtisis, Senior-Loken syndrome, and Jeune asphyxiating thoracic dystrophy among others. TTC21B is causally associated with diverse ciliopathies. It also acts as a modifier gene across the ciliopathy spectrum, interacting in trans with mutations in other ciliopathy-causing genes and contributing to disease manifestation and severity.</text>
</comment>
<comment type="disease" evidence="6">
    <disease id="DI-03051">
        <name>Nephronophthisis 12</name>
        <acronym>NPHP12</acronym>
        <description>An autosomal recessive disorder resulting in end-stage renal disease. It is a progressive tubulo-interstitial kidney disorder histologically characterized by modifications of the tubules with thickening of the basement membrane, interstitial fibrosis and, in the advanced stages, medullary cysts. Some patients manifest extra-renal features including retinal, skeletal and central nervous system defects.</description>
        <dbReference type="MIM" id="613820"/>
    </disease>
    <text>The disease is caused by variants affecting the gene represented in this entry.</text>
</comment>
<comment type="disease" evidence="6">
    <disease id="DI-03067">
        <name>Short-rib thoracic dysplasia 4 with or without polydactyly</name>
        <acronym>SRTD4</acronym>
        <description>A form of short-rib thoracic dysplasia, a group of autosomal recessive ciliopathies that are characterized by a constricted thoracic cage, short ribs, shortened tubular bones, and a 'trident' appearance of the acetabular roof. Polydactyly is variably present. Non-skeletal involvement can include cleft lip/palate as well as anomalies of major organs such as the brain, eye, heart, kidneys, liver, pancreas, intestines, and genitalia. Some forms of the disease are lethal in the neonatal period due to respiratory insufficiency secondary to a severely restricted thoracic cage, whereas others are compatible with life. Disease spectrum encompasses Ellis-van Creveld syndrome, asphyxiating thoracic dystrophy (Jeune syndrome), Mainzer-Saldino syndrome, and short rib-polydactyly syndrome.</description>
        <dbReference type="MIM" id="613819"/>
    </disease>
    <text>The disease is caused by variants affecting the gene represented in this entry.</text>
</comment>
<comment type="disease" evidence="6 7">
    <disease id="DI-03108">
        <name>Joubert syndrome 11</name>
        <acronym>JBTS11</acronym>
        <description>A disorder presenting with cerebellar ataxia, oculomotor apraxia, hypotonia, neonatal breathing abnormalities and psychomotor delay. Neuroradiologically, it is characterized by cerebellar vermian hypoplasia/aplasia, thickened and reoriented superior cerebellar peduncles, and an abnormally large interpeduncular fossa, giving the appearance of a molar tooth on transaxial slices (molar tooth sign). Additional variable features include retinal dystrophy and renal disease.</description>
        <dbReference type="MIM" id="613820"/>
    </disease>
    <text>The disease may be caused by variants affecting the gene represented in this entry.</text>
</comment>
<comment type="similarity">
    <text evidence="14">Belongs to the TTC21 family.</text>
</comment>
<comment type="sequence caution" evidence="14">
    <conflict type="erroneous gene model prediction">
        <sequence resource="EMBL-CDS" id="AAY14750"/>
    </conflict>
</comment>
<comment type="sequence caution" evidence="14">
    <conflict type="erroneous initiation">
        <sequence resource="EMBL-CDS" id="BAB13836"/>
    </conflict>
    <text>Truncated N-terminus.</text>
</comment>
<name>TT21B_HUMAN</name>